<dbReference type="EC" id="3.1.1.29" evidence="1"/>
<dbReference type="EMBL" id="AP008231">
    <property type="protein sequence ID" value="BAD79476.1"/>
    <property type="molecule type" value="Genomic_DNA"/>
</dbReference>
<dbReference type="RefSeq" id="WP_011243598.1">
    <property type="nucleotide sequence ID" value="NZ_CP085785.1"/>
</dbReference>
<dbReference type="SMR" id="Q5N2J4"/>
<dbReference type="GeneID" id="72429041"/>
<dbReference type="KEGG" id="syc:syc1286_c"/>
<dbReference type="eggNOG" id="COG0193">
    <property type="taxonomic scope" value="Bacteria"/>
</dbReference>
<dbReference type="Proteomes" id="UP000001175">
    <property type="component" value="Chromosome"/>
</dbReference>
<dbReference type="GO" id="GO:0005737">
    <property type="term" value="C:cytoplasm"/>
    <property type="evidence" value="ECO:0007669"/>
    <property type="project" value="UniProtKB-SubCell"/>
</dbReference>
<dbReference type="GO" id="GO:0004045">
    <property type="term" value="F:peptidyl-tRNA hydrolase activity"/>
    <property type="evidence" value="ECO:0007669"/>
    <property type="project" value="UniProtKB-UniRule"/>
</dbReference>
<dbReference type="GO" id="GO:0000049">
    <property type="term" value="F:tRNA binding"/>
    <property type="evidence" value="ECO:0007669"/>
    <property type="project" value="UniProtKB-UniRule"/>
</dbReference>
<dbReference type="GO" id="GO:0006515">
    <property type="term" value="P:protein quality control for misfolded or incompletely synthesized proteins"/>
    <property type="evidence" value="ECO:0007669"/>
    <property type="project" value="UniProtKB-UniRule"/>
</dbReference>
<dbReference type="GO" id="GO:0072344">
    <property type="term" value="P:rescue of stalled ribosome"/>
    <property type="evidence" value="ECO:0007669"/>
    <property type="project" value="UniProtKB-UniRule"/>
</dbReference>
<dbReference type="CDD" id="cd00462">
    <property type="entry name" value="PTH"/>
    <property type="match status" value="1"/>
</dbReference>
<dbReference type="FunFam" id="3.40.50.1470:FF:000001">
    <property type="entry name" value="Peptidyl-tRNA hydrolase"/>
    <property type="match status" value="1"/>
</dbReference>
<dbReference type="Gene3D" id="3.40.50.1470">
    <property type="entry name" value="Peptidyl-tRNA hydrolase"/>
    <property type="match status" value="1"/>
</dbReference>
<dbReference type="HAMAP" id="MF_00083">
    <property type="entry name" value="Pept_tRNA_hydro_bact"/>
    <property type="match status" value="1"/>
</dbReference>
<dbReference type="InterPro" id="IPR001328">
    <property type="entry name" value="Pept_tRNA_hydro"/>
</dbReference>
<dbReference type="InterPro" id="IPR018171">
    <property type="entry name" value="Pept_tRNA_hydro_CS"/>
</dbReference>
<dbReference type="InterPro" id="IPR036416">
    <property type="entry name" value="Pept_tRNA_hydro_sf"/>
</dbReference>
<dbReference type="NCBIfam" id="TIGR00447">
    <property type="entry name" value="pth"/>
    <property type="match status" value="1"/>
</dbReference>
<dbReference type="PANTHER" id="PTHR17224">
    <property type="entry name" value="PEPTIDYL-TRNA HYDROLASE"/>
    <property type="match status" value="1"/>
</dbReference>
<dbReference type="PANTHER" id="PTHR17224:SF1">
    <property type="entry name" value="PEPTIDYL-TRNA HYDROLASE"/>
    <property type="match status" value="1"/>
</dbReference>
<dbReference type="Pfam" id="PF01195">
    <property type="entry name" value="Pept_tRNA_hydro"/>
    <property type="match status" value="1"/>
</dbReference>
<dbReference type="SUPFAM" id="SSF53178">
    <property type="entry name" value="Peptidyl-tRNA hydrolase-like"/>
    <property type="match status" value="1"/>
</dbReference>
<dbReference type="PROSITE" id="PS01195">
    <property type="entry name" value="PEPT_TRNA_HYDROL_1"/>
    <property type="match status" value="1"/>
</dbReference>
<dbReference type="PROSITE" id="PS01196">
    <property type="entry name" value="PEPT_TRNA_HYDROL_2"/>
    <property type="match status" value="1"/>
</dbReference>
<organism>
    <name type="scientific">Synechococcus sp. (strain ATCC 27144 / PCC 6301 / SAUG 1402/1)</name>
    <name type="common">Anacystis nidulans</name>
    <dbReference type="NCBI Taxonomy" id="269084"/>
    <lineage>
        <taxon>Bacteria</taxon>
        <taxon>Bacillati</taxon>
        <taxon>Cyanobacteriota</taxon>
        <taxon>Cyanophyceae</taxon>
        <taxon>Synechococcales</taxon>
        <taxon>Synechococcaceae</taxon>
        <taxon>Synechococcus</taxon>
    </lineage>
</organism>
<evidence type="ECO:0000255" key="1">
    <source>
        <dbReference type="HAMAP-Rule" id="MF_00083"/>
    </source>
</evidence>
<sequence length="208" mass="23083">MSEDRPTLLVGLGNPGQKYAETRHNIGFMLIDRLAQDWGVKLSEDRKFQGEYGETAVPGLGKIRLLKPTTFMNQSGRSLRAVLDWYKLTPQQILVIYDDMDLPLGRLRLRQSGSAGTHNGMKSIISHLSSKDFPRLRLGISLPRSQSNDRHDATVSHVLGKFAVSEQSLLKQVLDLAQEATETALRSGVETAMNRYNARSLEAPAPVA</sequence>
<proteinExistence type="inferred from homology"/>
<gene>
    <name evidence="1" type="primary">pth</name>
    <name type="ordered locus">syc1286_c</name>
</gene>
<protein>
    <recommendedName>
        <fullName evidence="1">Peptidyl-tRNA hydrolase</fullName>
        <shortName evidence="1">Pth</shortName>
        <ecNumber evidence="1">3.1.1.29</ecNumber>
    </recommendedName>
</protein>
<feature type="chain" id="PRO_0000187838" description="Peptidyl-tRNA hydrolase">
    <location>
        <begin position="1"/>
        <end position="208"/>
    </location>
</feature>
<feature type="active site" description="Proton acceptor" evidence="1">
    <location>
        <position position="24"/>
    </location>
</feature>
<feature type="binding site" evidence="1">
    <location>
        <position position="19"/>
    </location>
    <ligand>
        <name>tRNA</name>
        <dbReference type="ChEBI" id="CHEBI:17843"/>
    </ligand>
</feature>
<feature type="binding site" evidence="1">
    <location>
        <position position="71"/>
    </location>
    <ligand>
        <name>tRNA</name>
        <dbReference type="ChEBI" id="CHEBI:17843"/>
    </ligand>
</feature>
<feature type="binding site" evidence="1">
    <location>
        <position position="73"/>
    </location>
    <ligand>
        <name>tRNA</name>
        <dbReference type="ChEBI" id="CHEBI:17843"/>
    </ligand>
</feature>
<feature type="binding site" evidence="1">
    <location>
        <position position="119"/>
    </location>
    <ligand>
        <name>tRNA</name>
        <dbReference type="ChEBI" id="CHEBI:17843"/>
    </ligand>
</feature>
<feature type="site" description="Discriminates between blocked and unblocked aminoacyl-tRNA" evidence="1">
    <location>
        <position position="14"/>
    </location>
</feature>
<feature type="site" description="Stabilizes the basic form of H active site to accept a proton" evidence="1">
    <location>
        <position position="98"/>
    </location>
</feature>
<comment type="function">
    <text evidence="1">Hydrolyzes ribosome-free peptidyl-tRNAs (with 1 or more amino acids incorporated), which drop off the ribosome during protein synthesis, or as a result of ribosome stalling.</text>
</comment>
<comment type="function">
    <text evidence="1">Catalyzes the release of premature peptidyl moieties from peptidyl-tRNA molecules trapped in stalled 50S ribosomal subunits, and thus maintains levels of free tRNAs and 50S ribosomes.</text>
</comment>
<comment type="catalytic activity">
    <reaction evidence="1">
        <text>an N-acyl-L-alpha-aminoacyl-tRNA + H2O = an N-acyl-L-amino acid + a tRNA + H(+)</text>
        <dbReference type="Rhea" id="RHEA:54448"/>
        <dbReference type="Rhea" id="RHEA-COMP:10123"/>
        <dbReference type="Rhea" id="RHEA-COMP:13883"/>
        <dbReference type="ChEBI" id="CHEBI:15377"/>
        <dbReference type="ChEBI" id="CHEBI:15378"/>
        <dbReference type="ChEBI" id="CHEBI:59874"/>
        <dbReference type="ChEBI" id="CHEBI:78442"/>
        <dbReference type="ChEBI" id="CHEBI:138191"/>
        <dbReference type="EC" id="3.1.1.29"/>
    </reaction>
</comment>
<comment type="subunit">
    <text evidence="1">Monomer.</text>
</comment>
<comment type="subcellular location">
    <subcellularLocation>
        <location evidence="1">Cytoplasm</location>
    </subcellularLocation>
</comment>
<comment type="similarity">
    <text evidence="1">Belongs to the PTH family.</text>
</comment>
<name>PTH_SYNP6</name>
<accession>Q5N2J4</accession>
<reference key="1">
    <citation type="journal article" date="2007" name="Photosyn. Res.">
        <title>Complete nucleotide sequence of the freshwater unicellular cyanobacterium Synechococcus elongatus PCC 6301 chromosome: gene content and organization.</title>
        <authorList>
            <person name="Sugita C."/>
            <person name="Ogata K."/>
            <person name="Shikata M."/>
            <person name="Jikuya H."/>
            <person name="Takano J."/>
            <person name="Furumichi M."/>
            <person name="Kanehisa M."/>
            <person name="Omata T."/>
            <person name="Sugiura M."/>
            <person name="Sugita M."/>
        </authorList>
    </citation>
    <scope>NUCLEOTIDE SEQUENCE [LARGE SCALE GENOMIC DNA]</scope>
    <source>
        <strain>ATCC 27144 / PCC 6301 / SAUG 1402/1</strain>
    </source>
</reference>
<keyword id="KW-0963">Cytoplasm</keyword>
<keyword id="KW-0378">Hydrolase</keyword>
<keyword id="KW-0694">RNA-binding</keyword>
<keyword id="KW-0820">tRNA-binding</keyword>